<accession>A2BQ71</accession>
<reference key="1">
    <citation type="journal article" date="2007" name="PLoS Genet.">
        <title>Patterns and implications of gene gain and loss in the evolution of Prochlorococcus.</title>
        <authorList>
            <person name="Kettler G.C."/>
            <person name="Martiny A.C."/>
            <person name="Huang K."/>
            <person name="Zucker J."/>
            <person name="Coleman M.L."/>
            <person name="Rodrigue S."/>
            <person name="Chen F."/>
            <person name="Lapidus A."/>
            <person name="Ferriera S."/>
            <person name="Johnson J."/>
            <person name="Steglich C."/>
            <person name="Church G.M."/>
            <person name="Richardson P."/>
            <person name="Chisholm S.W."/>
        </authorList>
    </citation>
    <scope>NUCLEOTIDE SEQUENCE [LARGE SCALE GENOMIC DNA]</scope>
    <source>
        <strain>AS9601</strain>
    </source>
</reference>
<evidence type="ECO:0000255" key="1">
    <source>
        <dbReference type="HAMAP-Rule" id="MF_00412"/>
    </source>
</evidence>
<name>PROA_PROMS</name>
<gene>
    <name evidence="1" type="primary">proA</name>
    <name type="ordered locus">A9601_06461</name>
</gene>
<dbReference type="EC" id="1.2.1.41" evidence="1"/>
<dbReference type="EMBL" id="CP000551">
    <property type="protein sequence ID" value="ABM69932.1"/>
    <property type="molecule type" value="Genomic_DNA"/>
</dbReference>
<dbReference type="RefSeq" id="WP_011818094.1">
    <property type="nucleotide sequence ID" value="NC_008816.1"/>
</dbReference>
<dbReference type="SMR" id="A2BQ71"/>
<dbReference type="STRING" id="146891.A9601_06461"/>
<dbReference type="KEGG" id="pmb:A9601_06461"/>
<dbReference type="eggNOG" id="COG0014">
    <property type="taxonomic scope" value="Bacteria"/>
</dbReference>
<dbReference type="HOGENOM" id="CLU_030231_0_1_3"/>
<dbReference type="OrthoDB" id="9809970at2"/>
<dbReference type="UniPathway" id="UPA00098">
    <property type="reaction ID" value="UER00360"/>
</dbReference>
<dbReference type="Proteomes" id="UP000002590">
    <property type="component" value="Chromosome"/>
</dbReference>
<dbReference type="GO" id="GO:0005737">
    <property type="term" value="C:cytoplasm"/>
    <property type="evidence" value="ECO:0007669"/>
    <property type="project" value="UniProtKB-SubCell"/>
</dbReference>
<dbReference type="GO" id="GO:0004350">
    <property type="term" value="F:glutamate-5-semialdehyde dehydrogenase activity"/>
    <property type="evidence" value="ECO:0007669"/>
    <property type="project" value="UniProtKB-UniRule"/>
</dbReference>
<dbReference type="GO" id="GO:0050661">
    <property type="term" value="F:NADP binding"/>
    <property type="evidence" value="ECO:0007669"/>
    <property type="project" value="InterPro"/>
</dbReference>
<dbReference type="GO" id="GO:0055129">
    <property type="term" value="P:L-proline biosynthetic process"/>
    <property type="evidence" value="ECO:0007669"/>
    <property type="project" value="UniProtKB-UniRule"/>
</dbReference>
<dbReference type="CDD" id="cd07079">
    <property type="entry name" value="ALDH_F18-19_ProA-GPR"/>
    <property type="match status" value="1"/>
</dbReference>
<dbReference type="FunFam" id="3.40.309.10:FF:000006">
    <property type="entry name" value="Gamma-glutamyl phosphate reductase"/>
    <property type="match status" value="1"/>
</dbReference>
<dbReference type="Gene3D" id="3.40.605.10">
    <property type="entry name" value="Aldehyde Dehydrogenase, Chain A, domain 1"/>
    <property type="match status" value="1"/>
</dbReference>
<dbReference type="Gene3D" id="3.40.309.10">
    <property type="entry name" value="Aldehyde Dehydrogenase, Chain A, domain 2"/>
    <property type="match status" value="1"/>
</dbReference>
<dbReference type="HAMAP" id="MF_00412">
    <property type="entry name" value="ProA"/>
    <property type="match status" value="1"/>
</dbReference>
<dbReference type="InterPro" id="IPR016161">
    <property type="entry name" value="Ald_DH/histidinol_DH"/>
</dbReference>
<dbReference type="InterPro" id="IPR016163">
    <property type="entry name" value="Ald_DH_C"/>
</dbReference>
<dbReference type="InterPro" id="IPR016162">
    <property type="entry name" value="Ald_DH_N"/>
</dbReference>
<dbReference type="InterPro" id="IPR015590">
    <property type="entry name" value="Aldehyde_DH_dom"/>
</dbReference>
<dbReference type="InterPro" id="IPR020593">
    <property type="entry name" value="G-glutamylP_reductase_CS"/>
</dbReference>
<dbReference type="InterPro" id="IPR012134">
    <property type="entry name" value="Glu-5-SA_DH"/>
</dbReference>
<dbReference type="InterPro" id="IPR000965">
    <property type="entry name" value="GPR_dom"/>
</dbReference>
<dbReference type="NCBIfam" id="NF001221">
    <property type="entry name" value="PRK00197.1"/>
    <property type="match status" value="1"/>
</dbReference>
<dbReference type="NCBIfam" id="TIGR00407">
    <property type="entry name" value="proA"/>
    <property type="match status" value="1"/>
</dbReference>
<dbReference type="PANTHER" id="PTHR11063:SF8">
    <property type="entry name" value="DELTA-1-PYRROLINE-5-CARBOXYLATE SYNTHASE"/>
    <property type="match status" value="1"/>
</dbReference>
<dbReference type="PANTHER" id="PTHR11063">
    <property type="entry name" value="GLUTAMATE SEMIALDEHYDE DEHYDROGENASE"/>
    <property type="match status" value="1"/>
</dbReference>
<dbReference type="Pfam" id="PF00171">
    <property type="entry name" value="Aldedh"/>
    <property type="match status" value="1"/>
</dbReference>
<dbReference type="PIRSF" id="PIRSF000151">
    <property type="entry name" value="GPR"/>
    <property type="match status" value="1"/>
</dbReference>
<dbReference type="SUPFAM" id="SSF53720">
    <property type="entry name" value="ALDH-like"/>
    <property type="match status" value="1"/>
</dbReference>
<dbReference type="PROSITE" id="PS01223">
    <property type="entry name" value="PROA"/>
    <property type="match status" value="1"/>
</dbReference>
<comment type="function">
    <text evidence="1">Catalyzes the NADPH-dependent reduction of L-glutamate 5-phosphate into L-glutamate 5-semialdehyde and phosphate. The product spontaneously undergoes cyclization to form 1-pyrroline-5-carboxylate.</text>
</comment>
<comment type="catalytic activity">
    <reaction evidence="1">
        <text>L-glutamate 5-semialdehyde + phosphate + NADP(+) = L-glutamyl 5-phosphate + NADPH + H(+)</text>
        <dbReference type="Rhea" id="RHEA:19541"/>
        <dbReference type="ChEBI" id="CHEBI:15378"/>
        <dbReference type="ChEBI" id="CHEBI:43474"/>
        <dbReference type="ChEBI" id="CHEBI:57783"/>
        <dbReference type="ChEBI" id="CHEBI:58066"/>
        <dbReference type="ChEBI" id="CHEBI:58274"/>
        <dbReference type="ChEBI" id="CHEBI:58349"/>
        <dbReference type="EC" id="1.2.1.41"/>
    </reaction>
</comment>
<comment type="pathway">
    <text evidence="1">Amino-acid biosynthesis; L-proline biosynthesis; L-glutamate 5-semialdehyde from L-glutamate: step 2/2.</text>
</comment>
<comment type="subcellular location">
    <subcellularLocation>
        <location evidence="1">Cytoplasm</location>
    </subcellularLocation>
</comment>
<comment type="similarity">
    <text evidence="1">Belongs to the gamma-glutamyl phosphate reductase family.</text>
</comment>
<proteinExistence type="inferred from homology"/>
<sequence length="436" mass="47948">MANIFEVPQPGNDLLEKANKVRLASIEISQTENQNRIKALNFMADYLEKNSYEILDANNADYSSAQKKGISRALLSRLKLSKLKLNSGIEGVRKVGDLADPVNQVQIKRELSKGLFLERKTVPIGVLGVIFESRPDAVMQISSLAIRSGNGVMLKGGSEANLTNTAIVKALQEGLNASGLDKNAICLLTSRKDSMAMLNLEKYINLIIPRGSNELVKFIQENTRIPVLGHADGICHLFIDIEANLEMALSVALDSKIQYPAACNAIETLLLHKDIAPTFLEKAIPLFKSNDVKLIGDMRSVELGVKYEASLEDWKTEYLDLILSIKIVDDLEEAITHIQKYSSKHTDGIITENSHTANKFMNVIDSAGVFHNCSTRFADGFRYGFGAEVGISTQTLPPRGPVGLEGLVTYKYFLKGDGNIVDDFSSGKAIYTHKDL</sequence>
<organism>
    <name type="scientific">Prochlorococcus marinus (strain AS9601)</name>
    <dbReference type="NCBI Taxonomy" id="146891"/>
    <lineage>
        <taxon>Bacteria</taxon>
        <taxon>Bacillati</taxon>
        <taxon>Cyanobacteriota</taxon>
        <taxon>Cyanophyceae</taxon>
        <taxon>Synechococcales</taxon>
        <taxon>Prochlorococcaceae</taxon>
        <taxon>Prochlorococcus</taxon>
    </lineage>
</organism>
<keyword id="KW-0028">Amino-acid biosynthesis</keyword>
<keyword id="KW-0963">Cytoplasm</keyword>
<keyword id="KW-0521">NADP</keyword>
<keyword id="KW-0560">Oxidoreductase</keyword>
<keyword id="KW-0641">Proline biosynthesis</keyword>
<protein>
    <recommendedName>
        <fullName evidence="1">Gamma-glutamyl phosphate reductase</fullName>
        <shortName evidence="1">GPR</shortName>
        <ecNumber evidence="1">1.2.1.41</ecNumber>
    </recommendedName>
    <alternativeName>
        <fullName evidence="1">Glutamate-5-semialdehyde dehydrogenase</fullName>
    </alternativeName>
    <alternativeName>
        <fullName evidence="1">Glutamyl-gamma-semialdehyde dehydrogenase</fullName>
        <shortName evidence="1">GSA dehydrogenase</shortName>
    </alternativeName>
</protein>
<feature type="chain" id="PRO_1000049980" description="Gamma-glutamyl phosphate reductase">
    <location>
        <begin position="1"/>
        <end position="436"/>
    </location>
</feature>